<keyword id="KW-0963">Cytoplasm</keyword>
<keyword id="KW-0903">Direct protein sequencing</keyword>
<keyword id="KW-0443">Lipid metabolism</keyword>
<keyword id="KW-1185">Reference proteome</keyword>
<keyword id="KW-0808">Transferase</keyword>
<evidence type="ECO:0000250" key="1"/>
<evidence type="ECO:0000250" key="2">
    <source>
        <dbReference type="UniProtKB" id="P09488"/>
    </source>
</evidence>
<evidence type="ECO:0000269" key="3">
    <source>
    </source>
</evidence>
<evidence type="ECO:0000305" key="4"/>
<accession>Q9N0V4</accession>
<feature type="chain" id="PRO_0000240625" description="Glutathione S-transferase Mu 1">
    <location>
        <begin position="1"/>
        <end position="218"/>
    </location>
</feature>
<feature type="domain" description="GST N-terminal">
    <location>
        <begin position="2"/>
        <end position="88"/>
    </location>
</feature>
<feature type="domain" description="GST C-terminal">
    <location>
        <begin position="90"/>
        <end position="208"/>
    </location>
</feature>
<feature type="binding site" evidence="2">
    <location>
        <begin position="7"/>
        <end position="8"/>
    </location>
    <ligand>
        <name>glutathione</name>
        <dbReference type="ChEBI" id="CHEBI:57925"/>
    </ligand>
</feature>
<feature type="binding site" evidence="2">
    <location>
        <begin position="43"/>
        <end position="46"/>
    </location>
    <ligand>
        <name>glutathione</name>
        <dbReference type="ChEBI" id="CHEBI:57925"/>
    </ligand>
</feature>
<feature type="binding site" evidence="2">
    <location>
        <position position="50"/>
    </location>
    <ligand>
        <name>glutathione</name>
        <dbReference type="ChEBI" id="CHEBI:57925"/>
    </ligand>
</feature>
<feature type="binding site" evidence="2">
    <location>
        <begin position="59"/>
        <end position="60"/>
    </location>
    <ligand>
        <name>glutathione</name>
        <dbReference type="ChEBI" id="CHEBI:57925"/>
    </ligand>
</feature>
<feature type="binding site" evidence="2">
    <location>
        <begin position="72"/>
        <end position="73"/>
    </location>
    <ligand>
        <name>glutathione</name>
        <dbReference type="ChEBI" id="CHEBI:57925"/>
    </ligand>
</feature>
<feature type="binding site" evidence="1">
    <location>
        <position position="116"/>
    </location>
    <ligand>
        <name>substrate</name>
    </ligand>
</feature>
<sequence length="218" mass="25635">MPMILGYWDIRGLAHAIRLLLEYTDTNYEERQYSVGDAPDYDRSQWLNEKFKLGLDFPNLPYLIDGTHKLTQSNAILRYIARKHNLCGETEEEMIRVDILENQVMDVRLAMARICYSPDFEKLKPGFLKEIPEKIKLFSEFLGKRPWFAGDKLTYVDFLVYDVLDMHRIFEPKCLDAFPNLKDFISRFEGLKKISAYMKSSRFLPGPLFMKLAVWGNK</sequence>
<protein>
    <recommendedName>
        <fullName evidence="4">Glutathione S-transferase Mu 1</fullName>
        <ecNumber evidence="2">2.5.1.18</ecNumber>
    </recommendedName>
    <alternativeName>
        <fullName>GST class-mu 1</fullName>
    </alternativeName>
    <alternativeName>
        <fullName>GSTM1-1</fullName>
    </alternativeName>
</protein>
<reference key="1">
    <citation type="journal article" date="2000" name="Exp. Eye Res.">
        <title>A lens glutathione S-transferase, class mu, with thiol-specific antioxidant activity.</title>
        <authorList>
            <person name="Jimenez-Asensio J."/>
            <person name="Garland D."/>
        </authorList>
    </citation>
    <scope>NUCLEOTIDE SEQUENCE [MRNA]</scope>
    <scope>PARTIAL PROTEIN SEQUENCE</scope>
    <scope>FUNCTION</scope>
    <scope>SUBUNIT</scope>
    <source>
        <tissue>Lens</tissue>
    </source>
</reference>
<reference key="2">
    <citation type="submission" date="2005-08" db="EMBL/GenBank/DDBJ databases">
        <authorList>
            <consortium name="NIH - Mammalian Gene Collection (MGC) project"/>
        </authorList>
    </citation>
    <scope>NUCLEOTIDE SEQUENCE [LARGE SCALE MRNA]</scope>
    <source>
        <strain>Crossbred X Angus</strain>
        <tissue>Ileum</tissue>
    </source>
</reference>
<gene>
    <name type="primary">GSTM1</name>
    <name type="synonym">GSTM</name>
</gene>
<organism>
    <name type="scientific">Bos taurus</name>
    <name type="common">Bovine</name>
    <dbReference type="NCBI Taxonomy" id="9913"/>
    <lineage>
        <taxon>Eukaryota</taxon>
        <taxon>Metazoa</taxon>
        <taxon>Chordata</taxon>
        <taxon>Craniata</taxon>
        <taxon>Vertebrata</taxon>
        <taxon>Euteleostomi</taxon>
        <taxon>Mammalia</taxon>
        <taxon>Eutheria</taxon>
        <taxon>Laurasiatheria</taxon>
        <taxon>Artiodactyla</taxon>
        <taxon>Ruminantia</taxon>
        <taxon>Pecora</taxon>
        <taxon>Bovidae</taxon>
        <taxon>Bovinae</taxon>
        <taxon>Bos</taxon>
    </lineage>
</organism>
<dbReference type="EC" id="2.5.1.18" evidence="2"/>
<dbReference type="EMBL" id="BC102050">
    <property type="protein sequence ID" value="AAI02051.1"/>
    <property type="molecule type" value="mRNA"/>
</dbReference>
<dbReference type="EMBL" id="AF249588">
    <property type="protein sequence ID" value="AAF64308.1"/>
    <property type="molecule type" value="mRNA"/>
</dbReference>
<dbReference type="RefSeq" id="NP_787019.1">
    <property type="nucleotide sequence ID" value="NM_175825.3"/>
</dbReference>
<dbReference type="SMR" id="Q9N0V4"/>
<dbReference type="FunCoup" id="Q9N0V4">
    <property type="interactions" value="269"/>
</dbReference>
<dbReference type="STRING" id="9913.ENSBTAP00000016866"/>
<dbReference type="PaxDb" id="9913-ENSBTAP00000023627"/>
<dbReference type="PeptideAtlas" id="Q9N0V4"/>
<dbReference type="GeneID" id="327709"/>
<dbReference type="KEGG" id="bta:327709"/>
<dbReference type="eggNOG" id="KOG1695">
    <property type="taxonomic scope" value="Eukaryota"/>
</dbReference>
<dbReference type="HOGENOM" id="CLU_039475_2_0_1"/>
<dbReference type="InParanoid" id="Q9N0V4"/>
<dbReference type="OrthoDB" id="4951845at2759"/>
<dbReference type="TreeFam" id="TF353040"/>
<dbReference type="Proteomes" id="UP000009136">
    <property type="component" value="Unplaced"/>
</dbReference>
<dbReference type="GO" id="GO:0005737">
    <property type="term" value="C:cytoplasm"/>
    <property type="evidence" value="ECO:0007669"/>
    <property type="project" value="UniProtKB-SubCell"/>
</dbReference>
<dbReference type="GO" id="GO:0004364">
    <property type="term" value="F:glutathione transferase activity"/>
    <property type="evidence" value="ECO:0000250"/>
    <property type="project" value="UniProtKB"/>
</dbReference>
<dbReference type="GO" id="GO:1901687">
    <property type="term" value="P:glutathione derivative biosynthetic process"/>
    <property type="evidence" value="ECO:0000250"/>
    <property type="project" value="UniProtKB"/>
</dbReference>
<dbReference type="GO" id="GO:0006749">
    <property type="term" value="P:glutathione metabolic process"/>
    <property type="evidence" value="ECO:0000318"/>
    <property type="project" value="GO_Central"/>
</dbReference>
<dbReference type="GO" id="GO:0051122">
    <property type="term" value="P:hepoxilin biosynthetic process"/>
    <property type="evidence" value="ECO:0000250"/>
    <property type="project" value="UniProtKB"/>
</dbReference>
<dbReference type="GO" id="GO:0006693">
    <property type="term" value="P:prostaglandin metabolic process"/>
    <property type="evidence" value="ECO:0000250"/>
    <property type="project" value="UniProtKB"/>
</dbReference>
<dbReference type="CDD" id="cd03209">
    <property type="entry name" value="GST_C_Mu"/>
    <property type="match status" value="1"/>
</dbReference>
<dbReference type="CDD" id="cd03075">
    <property type="entry name" value="GST_N_Mu"/>
    <property type="match status" value="1"/>
</dbReference>
<dbReference type="FunFam" id="1.20.1050.10:FF:000083">
    <property type="entry name" value="Glutathione S-transferase Mu 1"/>
    <property type="match status" value="1"/>
</dbReference>
<dbReference type="FunFam" id="3.40.30.10:FF:000603">
    <property type="entry name" value="Glutathione S-transferase Mu 1"/>
    <property type="match status" value="1"/>
</dbReference>
<dbReference type="Gene3D" id="1.20.1050.10">
    <property type="match status" value="1"/>
</dbReference>
<dbReference type="Gene3D" id="3.40.30.10">
    <property type="entry name" value="Glutaredoxin"/>
    <property type="match status" value="1"/>
</dbReference>
<dbReference type="InterPro" id="IPR010987">
    <property type="entry name" value="Glutathione-S-Trfase_C-like"/>
</dbReference>
<dbReference type="InterPro" id="IPR036282">
    <property type="entry name" value="Glutathione-S-Trfase_C_sf"/>
</dbReference>
<dbReference type="InterPro" id="IPR004045">
    <property type="entry name" value="Glutathione_S-Trfase_N"/>
</dbReference>
<dbReference type="InterPro" id="IPR004046">
    <property type="entry name" value="GST_C"/>
</dbReference>
<dbReference type="InterPro" id="IPR003081">
    <property type="entry name" value="GST_mu"/>
</dbReference>
<dbReference type="InterPro" id="IPR050213">
    <property type="entry name" value="GST_superfamily"/>
</dbReference>
<dbReference type="InterPro" id="IPR036249">
    <property type="entry name" value="Thioredoxin-like_sf"/>
</dbReference>
<dbReference type="PANTHER" id="PTHR11571">
    <property type="entry name" value="GLUTATHIONE S-TRANSFERASE"/>
    <property type="match status" value="1"/>
</dbReference>
<dbReference type="PANTHER" id="PTHR11571:SF137">
    <property type="entry name" value="GLUTATHIONE S-TRANSFERASE MU 4"/>
    <property type="match status" value="1"/>
</dbReference>
<dbReference type="Pfam" id="PF00043">
    <property type="entry name" value="GST_C"/>
    <property type="match status" value="1"/>
</dbReference>
<dbReference type="Pfam" id="PF02798">
    <property type="entry name" value="GST_N"/>
    <property type="match status" value="1"/>
</dbReference>
<dbReference type="PRINTS" id="PR01267">
    <property type="entry name" value="GSTRNSFRASEM"/>
</dbReference>
<dbReference type="SFLD" id="SFLDG01205">
    <property type="entry name" value="AMPS.1"/>
    <property type="match status" value="1"/>
</dbReference>
<dbReference type="SFLD" id="SFLDG00363">
    <property type="entry name" value="AMPS_(cytGST):_Alpha-__Mu-__Pi"/>
    <property type="match status" value="1"/>
</dbReference>
<dbReference type="SUPFAM" id="SSF47616">
    <property type="entry name" value="GST C-terminal domain-like"/>
    <property type="match status" value="1"/>
</dbReference>
<dbReference type="SUPFAM" id="SSF52833">
    <property type="entry name" value="Thioredoxin-like"/>
    <property type="match status" value="1"/>
</dbReference>
<dbReference type="PROSITE" id="PS50405">
    <property type="entry name" value="GST_CTER"/>
    <property type="match status" value="1"/>
</dbReference>
<dbReference type="PROSITE" id="PS50404">
    <property type="entry name" value="GST_NTER"/>
    <property type="match status" value="1"/>
</dbReference>
<name>GSTM1_BOVIN</name>
<comment type="function">
    <text evidence="2 3">Conjugation of reduced glutathione to a wide number of exogenous and endogenous hydrophobic electrophiles. Protects against the thiol-mediated metal-catalyzed oxidative inactivation of enzymes. Involved in the formation of glutathione conjugates of both prostaglandin A2 (PGA2) and prostaglandin J2 (PGJ2). Participates in the formation of novel hepoxilin regioisomers (By similarity).</text>
</comment>
<comment type="catalytic activity">
    <reaction evidence="2">
        <text>RX + glutathione = an S-substituted glutathione + a halide anion + H(+)</text>
        <dbReference type="Rhea" id="RHEA:16437"/>
        <dbReference type="ChEBI" id="CHEBI:15378"/>
        <dbReference type="ChEBI" id="CHEBI:16042"/>
        <dbReference type="ChEBI" id="CHEBI:17792"/>
        <dbReference type="ChEBI" id="CHEBI:57925"/>
        <dbReference type="ChEBI" id="CHEBI:90779"/>
        <dbReference type="EC" id="2.5.1.18"/>
    </reaction>
    <physiologicalReaction direction="left-to-right" evidence="2">
        <dbReference type="Rhea" id="RHEA:16438"/>
    </physiologicalReaction>
</comment>
<comment type="catalytic activity">
    <reaction evidence="2">
        <text>prostaglandin A2 + glutathione = prostaglandin A2-S-(R)-glutathione</text>
        <dbReference type="Rhea" id="RHEA:50796"/>
        <dbReference type="ChEBI" id="CHEBI:57925"/>
        <dbReference type="ChEBI" id="CHEBI:133370"/>
        <dbReference type="ChEBI" id="CHEBI:133768"/>
    </reaction>
    <physiologicalReaction direction="left-to-right" evidence="2">
        <dbReference type="Rhea" id="RHEA:50797"/>
    </physiologicalReaction>
</comment>
<comment type="catalytic activity">
    <reaction evidence="2">
        <text>prostaglandin J2 + glutathione = prostaglandin J2-S-(R)-glutathione</text>
        <dbReference type="Rhea" id="RHEA:50804"/>
        <dbReference type="ChEBI" id="CHEBI:57925"/>
        <dbReference type="ChEBI" id="CHEBI:133396"/>
        <dbReference type="ChEBI" id="CHEBI:133771"/>
    </reaction>
    <physiologicalReaction direction="left-to-right" evidence="2">
        <dbReference type="Rhea" id="RHEA:50805"/>
    </physiologicalReaction>
</comment>
<comment type="catalytic activity">
    <reaction evidence="2">
        <text>prostaglandin J2 + glutathione = prostaglandin J2-S-(S)-glutathione</text>
        <dbReference type="Rhea" id="RHEA:50808"/>
        <dbReference type="ChEBI" id="CHEBI:57925"/>
        <dbReference type="ChEBI" id="CHEBI:133396"/>
        <dbReference type="ChEBI" id="CHEBI:133772"/>
    </reaction>
    <physiologicalReaction direction="left-to-right" evidence="2">
        <dbReference type="Rhea" id="RHEA:50809"/>
    </physiologicalReaction>
</comment>
<comment type="catalytic activity">
    <reaction evidence="2">
        <text>prostaglandin A2 + glutathione = prostaglandin A2-S-(S)-glutathione</text>
        <dbReference type="Rhea" id="RHEA:50800"/>
        <dbReference type="ChEBI" id="CHEBI:57925"/>
        <dbReference type="ChEBI" id="CHEBI:133370"/>
        <dbReference type="ChEBI" id="CHEBI:133769"/>
    </reaction>
    <physiologicalReaction direction="left-to-right" evidence="2">
        <dbReference type="Rhea" id="RHEA:50801"/>
    </physiologicalReaction>
</comment>
<comment type="catalytic activity">
    <reaction evidence="2">
        <text>11(S)-hydroxy-14(S),15(S)-epoxy-(5Z,8Z,12E)-eicosatrienoate + glutathione = (11S,15S)-dihydroxy-14(R)-S-glutathionyl-(5Z,8Z,12E)-eicosatrienoate</text>
        <dbReference type="Rhea" id="RHEA:50260"/>
        <dbReference type="ChEBI" id="CHEBI:57925"/>
        <dbReference type="ChEBI" id="CHEBI:132200"/>
        <dbReference type="ChEBI" id="CHEBI:132201"/>
    </reaction>
    <physiologicalReaction direction="left-to-right" evidence="2">
        <dbReference type="Rhea" id="RHEA:50261"/>
    </physiologicalReaction>
</comment>
<comment type="subunit">
    <text evidence="3">Homodimer.</text>
</comment>
<comment type="subcellular location">
    <subcellularLocation>
        <location evidence="1">Cytoplasm</location>
    </subcellularLocation>
</comment>
<comment type="similarity">
    <text evidence="4">Belongs to the GST superfamily. Mu family.</text>
</comment>
<proteinExistence type="evidence at protein level"/>